<name>FOXG1_CEBCA</name>
<keyword id="KW-0217">Developmental protein</keyword>
<keyword id="KW-0238">DNA-binding</keyword>
<keyword id="KW-0539">Nucleus</keyword>
<keyword id="KW-0656">Proto-oncogene</keyword>
<keyword id="KW-0804">Transcription</keyword>
<keyword id="KW-0805">Transcription regulation</keyword>
<evidence type="ECO:0000250" key="1"/>
<evidence type="ECO:0000250" key="2">
    <source>
        <dbReference type="UniProtKB" id="P55316"/>
    </source>
</evidence>
<evidence type="ECO:0000250" key="3">
    <source>
        <dbReference type="UniProtKB" id="Q60987"/>
    </source>
</evidence>
<evidence type="ECO:0000255" key="4">
    <source>
        <dbReference type="PROSITE-ProRule" id="PRU00089"/>
    </source>
</evidence>
<evidence type="ECO:0000256" key="5">
    <source>
        <dbReference type="SAM" id="MobiDB-lite"/>
    </source>
</evidence>
<dbReference type="EMBL" id="DQ387961">
    <property type="protein sequence ID" value="ABD38844.1"/>
    <property type="molecule type" value="Genomic_DNA"/>
</dbReference>
<dbReference type="SMR" id="Q1A1A6"/>
<dbReference type="GO" id="GO:0005634">
    <property type="term" value="C:nucleus"/>
    <property type="evidence" value="ECO:0007669"/>
    <property type="project" value="UniProtKB-SubCell"/>
</dbReference>
<dbReference type="GO" id="GO:0003700">
    <property type="term" value="F:DNA-binding transcription factor activity"/>
    <property type="evidence" value="ECO:0007669"/>
    <property type="project" value="InterPro"/>
</dbReference>
<dbReference type="GO" id="GO:1990837">
    <property type="term" value="F:sequence-specific double-stranded DNA binding"/>
    <property type="evidence" value="ECO:0007669"/>
    <property type="project" value="TreeGrafter"/>
</dbReference>
<dbReference type="GO" id="GO:0006357">
    <property type="term" value="P:regulation of transcription by RNA polymerase II"/>
    <property type="evidence" value="ECO:0007669"/>
    <property type="project" value="TreeGrafter"/>
</dbReference>
<dbReference type="CDD" id="cd20021">
    <property type="entry name" value="FH_FOXG"/>
    <property type="match status" value="1"/>
</dbReference>
<dbReference type="FunFam" id="1.10.10.10:FF:000135">
    <property type="entry name" value="forkhead box protein G1"/>
    <property type="match status" value="1"/>
</dbReference>
<dbReference type="Gene3D" id="1.10.10.10">
    <property type="entry name" value="Winged helix-like DNA-binding domain superfamily/Winged helix DNA-binding domain"/>
    <property type="match status" value="1"/>
</dbReference>
<dbReference type="InterPro" id="IPR001766">
    <property type="entry name" value="Fork_head_dom"/>
</dbReference>
<dbReference type="InterPro" id="IPR047208">
    <property type="entry name" value="FOXG1"/>
</dbReference>
<dbReference type="InterPro" id="IPR018122">
    <property type="entry name" value="TF_fork_head_CS_1"/>
</dbReference>
<dbReference type="InterPro" id="IPR030456">
    <property type="entry name" value="TF_fork_head_CS_2"/>
</dbReference>
<dbReference type="InterPro" id="IPR036388">
    <property type="entry name" value="WH-like_DNA-bd_sf"/>
</dbReference>
<dbReference type="InterPro" id="IPR036390">
    <property type="entry name" value="WH_DNA-bd_sf"/>
</dbReference>
<dbReference type="PANTHER" id="PTHR46617">
    <property type="entry name" value="FORKHEAD BOX PROTEIN G1"/>
    <property type="match status" value="1"/>
</dbReference>
<dbReference type="PANTHER" id="PTHR46617:SF3">
    <property type="entry name" value="FORKHEAD BOX PROTEIN G1"/>
    <property type="match status" value="1"/>
</dbReference>
<dbReference type="Pfam" id="PF00250">
    <property type="entry name" value="Forkhead"/>
    <property type="match status" value="1"/>
</dbReference>
<dbReference type="PRINTS" id="PR00053">
    <property type="entry name" value="FORKHEAD"/>
</dbReference>
<dbReference type="SMART" id="SM00339">
    <property type="entry name" value="FH"/>
    <property type="match status" value="1"/>
</dbReference>
<dbReference type="SUPFAM" id="SSF81995">
    <property type="entry name" value="beta-sandwich domain of Sec23/24"/>
    <property type="match status" value="1"/>
</dbReference>
<dbReference type="SUPFAM" id="SSF46785">
    <property type="entry name" value="Winged helix' DNA-binding domain"/>
    <property type="match status" value="1"/>
</dbReference>
<dbReference type="PROSITE" id="PS00657">
    <property type="entry name" value="FORK_HEAD_1"/>
    <property type="match status" value="1"/>
</dbReference>
<dbReference type="PROSITE" id="PS00658">
    <property type="entry name" value="FORK_HEAD_2"/>
    <property type="match status" value="1"/>
</dbReference>
<dbReference type="PROSITE" id="PS50039">
    <property type="entry name" value="FORK_HEAD_3"/>
    <property type="match status" value="1"/>
</dbReference>
<feature type="chain" id="PRO_0000254883" description="Forkhead box protein G1">
    <location>
        <begin position="1"/>
        <end position="489"/>
    </location>
</feature>
<feature type="DNA-binding region" description="Fork-head" evidence="4">
    <location>
        <begin position="181"/>
        <end position="275"/>
    </location>
</feature>
<feature type="region of interest" description="Disordered" evidence="5">
    <location>
        <begin position="31"/>
        <end position="181"/>
    </location>
</feature>
<feature type="region of interest" description="Required for interaction with TLE6" evidence="3">
    <location>
        <begin position="249"/>
        <end position="344"/>
    </location>
</feature>
<feature type="region of interest" description="Interaction with KDM5B" evidence="1">
    <location>
        <begin position="383"/>
        <end position="406"/>
    </location>
</feature>
<feature type="region of interest" description="Disordered" evidence="5">
    <location>
        <begin position="427"/>
        <end position="455"/>
    </location>
</feature>
<feature type="compositionally biased region" description="Basic residues" evidence="5">
    <location>
        <begin position="35"/>
        <end position="58"/>
    </location>
</feature>
<feature type="compositionally biased region" description="Pro residues" evidence="5">
    <location>
        <begin position="59"/>
        <end position="85"/>
    </location>
</feature>
<feature type="compositionally biased region" description="Pro residues" evidence="5">
    <location>
        <begin position="104"/>
        <end position="113"/>
    </location>
</feature>
<feature type="compositionally biased region" description="Gly residues" evidence="5">
    <location>
        <begin position="123"/>
        <end position="135"/>
    </location>
</feature>
<feature type="compositionally biased region" description="Basic and acidic residues" evidence="5">
    <location>
        <begin position="142"/>
        <end position="181"/>
    </location>
</feature>
<feature type="compositionally biased region" description="Low complexity" evidence="5">
    <location>
        <begin position="427"/>
        <end position="450"/>
    </location>
</feature>
<sequence length="489" mass="52352">MLDMGDRKEVKMIPKSSFSINSLVPEAVQNDNHHASHGHHNSHHPQHHHHHHHHHHHPPPPAPQPPPPPQQQQPPPPPPPAPQPPQARGAPAADDDKGPQQLLLPPPPPPPPTAALDGAKADGLGGKGEPGGGPGELAPVGPDEKEKGAGAGGEEKKGAGEGGKDGEGGKEGEKKNGKYEKPPFSYNALIMMAIRQSPEKRLTLNGIYEFIMKNFPYYRENKQGWQNSIRHNLSLNKCFVKVPRHYDDPGKGNYWMLDPSSDDVFIGGTTGKLRRRSTTSRAKLAFKRGARLTSTGLTFMDRAGSLYWPMSPFLSLHHPRASSTLSYNGTTSAYPSHPMPYSSVLTQNSLGNNHSFSTANGLSVDRLVNGEIPYATHHLTAAALAASVPCGLSVPCSGTYSLNPCSVNLLAGQTSYFFPHVPHPSMTSQSSTSMSARAASSSTSPQAPSTLPCESLRPSLPSFTTGLSGGLSDYFTHQNQGSSSNPLIH</sequence>
<organism>
    <name type="scientific">Cebus capucinus</name>
    <name type="common">White-faced sapajou</name>
    <dbReference type="NCBI Taxonomy" id="9516"/>
    <lineage>
        <taxon>Eukaryota</taxon>
        <taxon>Metazoa</taxon>
        <taxon>Chordata</taxon>
        <taxon>Craniata</taxon>
        <taxon>Vertebrata</taxon>
        <taxon>Euteleostomi</taxon>
        <taxon>Mammalia</taxon>
        <taxon>Eutheria</taxon>
        <taxon>Euarchontoglires</taxon>
        <taxon>Primates</taxon>
        <taxon>Haplorrhini</taxon>
        <taxon>Platyrrhini</taxon>
        <taxon>Cebidae</taxon>
        <taxon>Cebinae</taxon>
        <taxon>Cebus</taxon>
    </lineage>
</organism>
<protein>
    <recommendedName>
        <fullName>Forkhead box protein G1</fullName>
        <shortName>FoxG1</shortName>
    </recommendedName>
</protein>
<proteinExistence type="inferred from homology"/>
<gene>
    <name type="primary">FOXG1</name>
</gene>
<comment type="function">
    <text evidence="2">Transcription repression factor which plays an important role in the establishment of the regional subdivision of the developing brain and in the development of the telencephalon.</text>
</comment>
<comment type="subunit">
    <text evidence="2 3">Interacts with KDM5B (By similarity). Interacts with GRG6/TLE6 (By similarity). Interacts with TLE1; the interaction is inhibited by interaction with TLE6/GRG6 (By similarity).</text>
</comment>
<comment type="subcellular location">
    <subcellularLocation>
        <location evidence="4">Nucleus</location>
    </subcellularLocation>
</comment>
<accession>Q1A1A6</accession>
<reference key="1">
    <citation type="submission" date="2006-02" db="EMBL/GenBank/DDBJ databases">
        <title>Evolutionary evolution of forkhead box G1.</title>
        <authorList>
            <person name="Bredenkamp N."/>
            <person name="Illing N."/>
        </authorList>
    </citation>
    <scope>NUCLEOTIDE SEQUENCE [GENOMIC DNA]</scope>
</reference>